<accession>Q325U1</accession>
<proteinExistence type="inferred from homology"/>
<organism>
    <name type="scientific">Shigella boydii serotype 4 (strain Sb227)</name>
    <dbReference type="NCBI Taxonomy" id="300268"/>
    <lineage>
        <taxon>Bacteria</taxon>
        <taxon>Pseudomonadati</taxon>
        <taxon>Pseudomonadota</taxon>
        <taxon>Gammaproteobacteria</taxon>
        <taxon>Enterobacterales</taxon>
        <taxon>Enterobacteriaceae</taxon>
        <taxon>Shigella</taxon>
    </lineage>
</organism>
<protein>
    <recommendedName>
        <fullName evidence="1">Methionine import ATP-binding protein MetN</fullName>
        <ecNumber evidence="1">7.4.2.11</ecNumber>
    </recommendedName>
</protein>
<comment type="function">
    <text evidence="1">Part of the ABC transporter complex MetNIQ involved in methionine import. Responsible for energy coupling to the transport system.</text>
</comment>
<comment type="catalytic activity">
    <reaction evidence="1">
        <text>L-methionine(out) + ATP + H2O = L-methionine(in) + ADP + phosphate + H(+)</text>
        <dbReference type="Rhea" id="RHEA:29779"/>
        <dbReference type="ChEBI" id="CHEBI:15377"/>
        <dbReference type="ChEBI" id="CHEBI:15378"/>
        <dbReference type="ChEBI" id="CHEBI:30616"/>
        <dbReference type="ChEBI" id="CHEBI:43474"/>
        <dbReference type="ChEBI" id="CHEBI:57844"/>
        <dbReference type="ChEBI" id="CHEBI:456216"/>
        <dbReference type="EC" id="7.4.2.11"/>
    </reaction>
</comment>
<comment type="catalytic activity">
    <reaction evidence="1">
        <text>D-methionine(out) + ATP + H2O = D-methionine(in) + ADP + phosphate + H(+)</text>
        <dbReference type="Rhea" id="RHEA:29767"/>
        <dbReference type="ChEBI" id="CHEBI:15377"/>
        <dbReference type="ChEBI" id="CHEBI:15378"/>
        <dbReference type="ChEBI" id="CHEBI:30616"/>
        <dbReference type="ChEBI" id="CHEBI:43474"/>
        <dbReference type="ChEBI" id="CHEBI:57932"/>
        <dbReference type="ChEBI" id="CHEBI:456216"/>
        <dbReference type="EC" id="7.4.2.11"/>
    </reaction>
</comment>
<comment type="subunit">
    <text evidence="1">The complex is composed of two ATP-binding proteins (MetN), two transmembrane proteins (MetI) and a solute-binding protein (MetQ).</text>
</comment>
<comment type="subcellular location">
    <subcellularLocation>
        <location evidence="1">Cell inner membrane</location>
        <topology evidence="1">Peripheral membrane protein</topology>
    </subcellularLocation>
</comment>
<comment type="similarity">
    <text evidence="1">Belongs to the ABC transporter superfamily. Methionine importer (TC 3.A.1.24) family.</text>
</comment>
<keyword id="KW-0029">Amino-acid transport</keyword>
<keyword id="KW-0067">ATP-binding</keyword>
<keyword id="KW-0997">Cell inner membrane</keyword>
<keyword id="KW-1003">Cell membrane</keyword>
<keyword id="KW-0472">Membrane</keyword>
<keyword id="KW-0547">Nucleotide-binding</keyword>
<keyword id="KW-1278">Translocase</keyword>
<keyword id="KW-0813">Transport</keyword>
<feature type="chain" id="PRO_0000270382" description="Methionine import ATP-binding protein MetN">
    <location>
        <begin position="1"/>
        <end position="343"/>
    </location>
</feature>
<feature type="domain" description="ABC transporter" evidence="1">
    <location>
        <begin position="2"/>
        <end position="241"/>
    </location>
</feature>
<feature type="binding site" evidence="1">
    <location>
        <begin position="38"/>
        <end position="45"/>
    </location>
    <ligand>
        <name>ATP</name>
        <dbReference type="ChEBI" id="CHEBI:30616"/>
    </ligand>
</feature>
<name>METN_SHIBS</name>
<reference key="1">
    <citation type="journal article" date="2005" name="Nucleic Acids Res.">
        <title>Genome dynamics and diversity of Shigella species, the etiologic agents of bacillary dysentery.</title>
        <authorList>
            <person name="Yang F."/>
            <person name="Yang J."/>
            <person name="Zhang X."/>
            <person name="Chen L."/>
            <person name="Jiang Y."/>
            <person name="Yan Y."/>
            <person name="Tang X."/>
            <person name="Wang J."/>
            <person name="Xiong Z."/>
            <person name="Dong J."/>
            <person name="Xue Y."/>
            <person name="Zhu Y."/>
            <person name="Xu X."/>
            <person name="Sun L."/>
            <person name="Chen S."/>
            <person name="Nie H."/>
            <person name="Peng J."/>
            <person name="Xu J."/>
            <person name="Wang Y."/>
            <person name="Yuan Z."/>
            <person name="Wen Y."/>
            <person name="Yao Z."/>
            <person name="Shen Y."/>
            <person name="Qiang B."/>
            <person name="Hou Y."/>
            <person name="Yu J."/>
            <person name="Jin Q."/>
        </authorList>
    </citation>
    <scope>NUCLEOTIDE SEQUENCE [LARGE SCALE GENOMIC DNA]</scope>
    <source>
        <strain>Sb227</strain>
    </source>
</reference>
<evidence type="ECO:0000255" key="1">
    <source>
        <dbReference type="HAMAP-Rule" id="MF_01719"/>
    </source>
</evidence>
<gene>
    <name evidence="1" type="primary">metN</name>
    <name type="ordered locus">SBO_0188</name>
</gene>
<dbReference type="EC" id="7.4.2.11" evidence="1"/>
<dbReference type="EMBL" id="CP000036">
    <property type="protein sequence ID" value="ABB64917.1"/>
    <property type="molecule type" value="Genomic_DNA"/>
</dbReference>
<dbReference type="RefSeq" id="WP_000593983.1">
    <property type="nucleotide sequence ID" value="NC_007613.1"/>
</dbReference>
<dbReference type="SMR" id="Q325U1"/>
<dbReference type="KEGG" id="sbo:SBO_0188"/>
<dbReference type="HOGENOM" id="CLU_000604_1_3_6"/>
<dbReference type="Proteomes" id="UP000007067">
    <property type="component" value="Chromosome"/>
</dbReference>
<dbReference type="GO" id="GO:0009276">
    <property type="term" value="C:Gram-negative-bacterium-type cell wall"/>
    <property type="evidence" value="ECO:0007669"/>
    <property type="project" value="InterPro"/>
</dbReference>
<dbReference type="GO" id="GO:0005886">
    <property type="term" value="C:plasma membrane"/>
    <property type="evidence" value="ECO:0007669"/>
    <property type="project" value="UniProtKB-SubCell"/>
</dbReference>
<dbReference type="GO" id="GO:0033232">
    <property type="term" value="F:ABC-type D-methionine transporter activity"/>
    <property type="evidence" value="ECO:0007669"/>
    <property type="project" value="UniProtKB-EC"/>
</dbReference>
<dbReference type="GO" id="GO:0005524">
    <property type="term" value="F:ATP binding"/>
    <property type="evidence" value="ECO:0007669"/>
    <property type="project" value="UniProtKB-KW"/>
</dbReference>
<dbReference type="GO" id="GO:0016887">
    <property type="term" value="F:ATP hydrolysis activity"/>
    <property type="evidence" value="ECO:0007669"/>
    <property type="project" value="InterPro"/>
</dbReference>
<dbReference type="CDD" id="cd03258">
    <property type="entry name" value="ABC_MetN_methionine_transporter"/>
    <property type="match status" value="1"/>
</dbReference>
<dbReference type="FunFam" id="3.30.70.260:FF:000014">
    <property type="entry name" value="Methionine import ATP-binding protein MetN"/>
    <property type="match status" value="1"/>
</dbReference>
<dbReference type="FunFam" id="3.40.50.300:FF:000233">
    <property type="entry name" value="Methionine import ATP-binding protein MetN"/>
    <property type="match status" value="1"/>
</dbReference>
<dbReference type="Gene3D" id="3.30.70.260">
    <property type="match status" value="1"/>
</dbReference>
<dbReference type="Gene3D" id="3.40.50.300">
    <property type="entry name" value="P-loop containing nucleotide triphosphate hydrolases"/>
    <property type="match status" value="1"/>
</dbReference>
<dbReference type="InterPro" id="IPR003593">
    <property type="entry name" value="AAA+_ATPase"/>
</dbReference>
<dbReference type="InterPro" id="IPR012692">
    <property type="entry name" value="ABC_MetN_proteobac"/>
</dbReference>
<dbReference type="InterPro" id="IPR003439">
    <property type="entry name" value="ABC_transporter-like_ATP-bd"/>
</dbReference>
<dbReference type="InterPro" id="IPR017871">
    <property type="entry name" value="ABC_transporter-like_CS"/>
</dbReference>
<dbReference type="InterPro" id="IPR045865">
    <property type="entry name" value="ACT-like_dom_sf"/>
</dbReference>
<dbReference type="InterPro" id="IPR041701">
    <property type="entry name" value="MetN_ABC"/>
</dbReference>
<dbReference type="InterPro" id="IPR050086">
    <property type="entry name" value="MetN_ABC_transporter-like"/>
</dbReference>
<dbReference type="InterPro" id="IPR018449">
    <property type="entry name" value="NIL_domain"/>
</dbReference>
<dbReference type="InterPro" id="IPR027417">
    <property type="entry name" value="P-loop_NTPase"/>
</dbReference>
<dbReference type="NCBIfam" id="TIGR02314">
    <property type="entry name" value="ABC_MetN"/>
    <property type="match status" value="1"/>
</dbReference>
<dbReference type="PANTHER" id="PTHR43166">
    <property type="entry name" value="AMINO ACID IMPORT ATP-BINDING PROTEIN"/>
    <property type="match status" value="1"/>
</dbReference>
<dbReference type="PANTHER" id="PTHR43166:SF30">
    <property type="entry name" value="METHIONINE IMPORT ATP-BINDING PROTEIN METN"/>
    <property type="match status" value="1"/>
</dbReference>
<dbReference type="Pfam" id="PF00005">
    <property type="entry name" value="ABC_tran"/>
    <property type="match status" value="1"/>
</dbReference>
<dbReference type="Pfam" id="PF09383">
    <property type="entry name" value="NIL"/>
    <property type="match status" value="1"/>
</dbReference>
<dbReference type="SMART" id="SM00382">
    <property type="entry name" value="AAA"/>
    <property type="match status" value="1"/>
</dbReference>
<dbReference type="SMART" id="SM00930">
    <property type="entry name" value="NIL"/>
    <property type="match status" value="1"/>
</dbReference>
<dbReference type="SUPFAM" id="SSF55021">
    <property type="entry name" value="ACT-like"/>
    <property type="match status" value="1"/>
</dbReference>
<dbReference type="SUPFAM" id="SSF52540">
    <property type="entry name" value="P-loop containing nucleoside triphosphate hydrolases"/>
    <property type="match status" value="1"/>
</dbReference>
<dbReference type="PROSITE" id="PS00211">
    <property type="entry name" value="ABC_TRANSPORTER_1"/>
    <property type="match status" value="1"/>
</dbReference>
<dbReference type="PROSITE" id="PS50893">
    <property type="entry name" value="ABC_TRANSPORTER_2"/>
    <property type="match status" value="1"/>
</dbReference>
<dbReference type="PROSITE" id="PS51264">
    <property type="entry name" value="METN"/>
    <property type="match status" value="1"/>
</dbReference>
<sequence length="343" mass="37814">MIKLSNITKVFHQGTRIIQALNNVSLHVPAGQIYGVIGASGAGKSTLIRCVNLLERPTEGSVLVDGQELTTLSESELTKARRQIGMIFQHFNLLSSRTVFGNVALPLELDNTPKDEIKRRVTELLSLVGLGDKHDSYPSNLSGGQKQRVAIARALASNPKVLLCDEATSALDPATTRSILELLKDINRRLGLTILLITHEMDVVKRICDCVAVISNGELIEQDTVSEVFSHPKTPLAQKFIQSTLHLDIPEDYQERLQAEPFTDCVPMLRLEFTGQSVDAPLLSETARRFNVNNNIISAQMDYAGGVKFGIMLTEMHGTQQDTQAAIAWLQEHHVKVEVLGYV</sequence>